<gene>
    <name type="ORF">DDB_G0287865</name>
</gene>
<comment type="subcellular location">
    <subcellularLocation>
        <location evidence="2">Membrane</location>
        <topology evidence="2">Single-pass membrane protein</topology>
    </subcellularLocation>
</comment>
<name>Y5934_DICDI</name>
<feature type="chain" id="PRO_0000347008" description="Putative uncharacterized transmembrane protein DDB_G0287865">
    <location>
        <begin position="1"/>
        <end position="62"/>
    </location>
</feature>
<feature type="transmembrane region" description="Helical" evidence="1">
    <location>
        <begin position="37"/>
        <end position="57"/>
    </location>
</feature>
<proteinExistence type="predicted"/>
<accession>Q54JQ0</accession>
<reference key="1">
    <citation type="journal article" date="2005" name="Nature">
        <title>The genome of the social amoeba Dictyostelium discoideum.</title>
        <authorList>
            <person name="Eichinger L."/>
            <person name="Pachebat J.A."/>
            <person name="Gloeckner G."/>
            <person name="Rajandream M.A."/>
            <person name="Sucgang R."/>
            <person name="Berriman M."/>
            <person name="Song J."/>
            <person name="Olsen R."/>
            <person name="Szafranski K."/>
            <person name="Xu Q."/>
            <person name="Tunggal B."/>
            <person name="Kummerfeld S."/>
            <person name="Madera M."/>
            <person name="Konfortov B.A."/>
            <person name="Rivero F."/>
            <person name="Bankier A.T."/>
            <person name="Lehmann R."/>
            <person name="Hamlin N."/>
            <person name="Davies R."/>
            <person name="Gaudet P."/>
            <person name="Fey P."/>
            <person name="Pilcher K."/>
            <person name="Chen G."/>
            <person name="Saunders D."/>
            <person name="Sodergren E.J."/>
            <person name="Davis P."/>
            <person name="Kerhornou A."/>
            <person name="Nie X."/>
            <person name="Hall N."/>
            <person name="Anjard C."/>
            <person name="Hemphill L."/>
            <person name="Bason N."/>
            <person name="Farbrother P."/>
            <person name="Desany B."/>
            <person name="Just E."/>
            <person name="Morio T."/>
            <person name="Rost R."/>
            <person name="Churcher C.M."/>
            <person name="Cooper J."/>
            <person name="Haydock S."/>
            <person name="van Driessche N."/>
            <person name="Cronin A."/>
            <person name="Goodhead I."/>
            <person name="Muzny D.M."/>
            <person name="Mourier T."/>
            <person name="Pain A."/>
            <person name="Lu M."/>
            <person name="Harper D."/>
            <person name="Lindsay R."/>
            <person name="Hauser H."/>
            <person name="James K.D."/>
            <person name="Quiles M."/>
            <person name="Madan Babu M."/>
            <person name="Saito T."/>
            <person name="Buchrieser C."/>
            <person name="Wardroper A."/>
            <person name="Felder M."/>
            <person name="Thangavelu M."/>
            <person name="Johnson D."/>
            <person name="Knights A."/>
            <person name="Loulseged H."/>
            <person name="Mungall K.L."/>
            <person name="Oliver K."/>
            <person name="Price C."/>
            <person name="Quail M.A."/>
            <person name="Urushihara H."/>
            <person name="Hernandez J."/>
            <person name="Rabbinowitsch E."/>
            <person name="Steffen D."/>
            <person name="Sanders M."/>
            <person name="Ma J."/>
            <person name="Kohara Y."/>
            <person name="Sharp S."/>
            <person name="Simmonds M.N."/>
            <person name="Spiegler S."/>
            <person name="Tivey A."/>
            <person name="Sugano S."/>
            <person name="White B."/>
            <person name="Walker D."/>
            <person name="Woodward J.R."/>
            <person name="Winckler T."/>
            <person name="Tanaka Y."/>
            <person name="Shaulsky G."/>
            <person name="Schleicher M."/>
            <person name="Weinstock G.M."/>
            <person name="Rosenthal A."/>
            <person name="Cox E.C."/>
            <person name="Chisholm R.L."/>
            <person name="Gibbs R.A."/>
            <person name="Loomis W.F."/>
            <person name="Platzer M."/>
            <person name="Kay R.R."/>
            <person name="Williams J.G."/>
            <person name="Dear P.H."/>
            <person name="Noegel A.A."/>
            <person name="Barrell B.G."/>
            <person name="Kuspa A."/>
        </authorList>
    </citation>
    <scope>NUCLEOTIDE SEQUENCE [LARGE SCALE GENOMIC DNA]</scope>
    <source>
        <strain>AX4</strain>
    </source>
</reference>
<protein>
    <recommendedName>
        <fullName>Putative uncharacterized transmembrane protein DDB_G0287865</fullName>
    </recommendedName>
</protein>
<evidence type="ECO:0000255" key="1"/>
<evidence type="ECO:0000305" key="2"/>
<sequence length="62" mass="7357">MQEEKNKEILLKDIENQIPYSKPFGVYDQLKKRIFRFILGVILLGVIIESITLLVVYFKDKK</sequence>
<organism>
    <name type="scientific">Dictyostelium discoideum</name>
    <name type="common">Social amoeba</name>
    <dbReference type="NCBI Taxonomy" id="44689"/>
    <lineage>
        <taxon>Eukaryota</taxon>
        <taxon>Amoebozoa</taxon>
        <taxon>Evosea</taxon>
        <taxon>Eumycetozoa</taxon>
        <taxon>Dictyostelia</taxon>
        <taxon>Dictyosteliales</taxon>
        <taxon>Dictyosteliaceae</taxon>
        <taxon>Dictyostelium</taxon>
    </lineage>
</organism>
<dbReference type="EMBL" id="AAFI02000104">
    <property type="protein sequence ID" value="EAL63579.1"/>
    <property type="molecule type" value="Genomic_DNA"/>
</dbReference>
<dbReference type="RefSeq" id="XP_637102.1">
    <property type="nucleotide sequence ID" value="XM_632010.1"/>
</dbReference>
<dbReference type="SMR" id="Q54JQ0"/>
<dbReference type="PaxDb" id="44689-DDB0215934"/>
<dbReference type="EnsemblProtists" id="EAL63579">
    <property type="protein sequence ID" value="EAL63579"/>
    <property type="gene ID" value="DDB_G0287865"/>
</dbReference>
<dbReference type="GeneID" id="8626356"/>
<dbReference type="KEGG" id="ddi:DDB_G0287865"/>
<dbReference type="dictyBase" id="DDB_G0287865"/>
<dbReference type="VEuPathDB" id="AmoebaDB:DDB_G0287865"/>
<dbReference type="HOGENOM" id="CLU_2908777_0_0_1"/>
<dbReference type="InParanoid" id="Q54JQ0"/>
<dbReference type="PRO" id="PR:Q54JQ0"/>
<dbReference type="Proteomes" id="UP000002195">
    <property type="component" value="Chromosome 5"/>
</dbReference>
<dbReference type="GO" id="GO:0016020">
    <property type="term" value="C:membrane"/>
    <property type="evidence" value="ECO:0007669"/>
    <property type="project" value="UniProtKB-SubCell"/>
</dbReference>
<keyword id="KW-0472">Membrane</keyword>
<keyword id="KW-1185">Reference proteome</keyword>
<keyword id="KW-0812">Transmembrane</keyword>
<keyword id="KW-1133">Transmembrane helix</keyword>